<gene>
    <name type="ordered locus">Rv0572A</name>
</gene>
<protein>
    <recommendedName>
        <fullName>Uncharacterized protein Rv0572A</fullName>
    </recommendedName>
</protein>
<sequence>MAADPQCTRCKQTIEPGWLYITAHRRGQAGIVDDGAVLIHVPGECPHPGEHVPRS</sequence>
<organism>
    <name type="scientific">Mycobacterium tuberculosis (strain ATCC 25618 / H37Rv)</name>
    <dbReference type="NCBI Taxonomy" id="83332"/>
    <lineage>
        <taxon>Bacteria</taxon>
        <taxon>Bacillati</taxon>
        <taxon>Actinomycetota</taxon>
        <taxon>Actinomycetes</taxon>
        <taxon>Mycobacteriales</taxon>
        <taxon>Mycobacteriaceae</taxon>
        <taxon>Mycobacterium</taxon>
        <taxon>Mycobacterium tuberculosis complex</taxon>
    </lineage>
</organism>
<accession>P0DMM4</accession>
<reference key="1">
    <citation type="journal article" date="1998" name="Nature">
        <title>Deciphering the biology of Mycobacterium tuberculosis from the complete genome sequence.</title>
        <authorList>
            <person name="Cole S.T."/>
            <person name="Brosch R."/>
            <person name="Parkhill J."/>
            <person name="Garnier T."/>
            <person name="Churcher C.M."/>
            <person name="Harris D.E."/>
            <person name="Gordon S.V."/>
            <person name="Eiglmeier K."/>
            <person name="Gas S."/>
            <person name="Barry C.E. III"/>
            <person name="Tekaia F."/>
            <person name="Badcock K."/>
            <person name="Basham D."/>
            <person name="Brown D."/>
            <person name="Chillingworth T."/>
            <person name="Connor R."/>
            <person name="Davies R.M."/>
            <person name="Devlin K."/>
            <person name="Feltwell T."/>
            <person name="Gentles S."/>
            <person name="Hamlin N."/>
            <person name="Holroyd S."/>
            <person name="Hornsby T."/>
            <person name="Jagels K."/>
            <person name="Krogh A."/>
            <person name="McLean J."/>
            <person name="Moule S."/>
            <person name="Murphy L.D."/>
            <person name="Oliver S."/>
            <person name="Osborne J."/>
            <person name="Quail M.A."/>
            <person name="Rajandream M.A."/>
            <person name="Rogers J."/>
            <person name="Rutter S."/>
            <person name="Seeger K."/>
            <person name="Skelton S."/>
            <person name="Squares S."/>
            <person name="Squares R."/>
            <person name="Sulston J.E."/>
            <person name="Taylor K."/>
            <person name="Whitehead S."/>
            <person name="Barrell B.G."/>
        </authorList>
    </citation>
    <scope>NUCLEOTIDE SEQUENCE [LARGE SCALE GENOMIC DNA]</scope>
    <source>
        <strain>ATCC 25618 / H37Rv</strain>
    </source>
</reference>
<reference key="2">
    <citation type="journal article" date="2011" name="Mol. Cell. Proteomics">
        <title>Proteogenomic analysis of Mycobacterium tuberculosis by high resolution mass spectrometry.</title>
        <authorList>
            <person name="Kelkar D.S."/>
            <person name="Kumar D."/>
            <person name="Kumar P."/>
            <person name="Balakrishnan L."/>
            <person name="Muthusamy B."/>
            <person name="Yadav A.K."/>
            <person name="Shrivastava P."/>
            <person name="Marimuthu A."/>
            <person name="Anand S."/>
            <person name="Sundaram H."/>
            <person name="Kingsbury R."/>
            <person name="Harsha H.C."/>
            <person name="Nair B."/>
            <person name="Prasad T.S."/>
            <person name="Chauhan D.S."/>
            <person name="Katoch K."/>
            <person name="Katoch V.M."/>
            <person name="Kumar P."/>
            <person name="Chaerkady R."/>
            <person name="Ramachandran S."/>
            <person name="Dash D."/>
            <person name="Pandey A."/>
        </authorList>
    </citation>
    <scope>IDENTIFICATION BY MASS SPECTROMETRY [LARGE SCALE ANALYSIS]</scope>
    <source>
        <strain>ATCC 25618 / H37Rv</strain>
    </source>
</reference>
<dbReference type="EMBL" id="AL123456">
    <property type="status" value="NOT_ANNOTATED_CDS"/>
    <property type="molecule type" value="Genomic_DNA"/>
</dbReference>
<dbReference type="InParanoid" id="P0DMM4"/>
<dbReference type="Proteomes" id="UP000001584">
    <property type="component" value="Chromosome"/>
</dbReference>
<feature type="chain" id="PRO_0000430094" description="Uncharacterized protein Rv0572A">
    <location>
        <begin position="1"/>
        <end position="55"/>
    </location>
</feature>
<proteinExistence type="evidence at protein level"/>
<keyword id="KW-1185">Reference proteome</keyword>
<name>Y572A_MYCTU</name>